<comment type="function">
    <text evidence="1">The RecF protein is involved in DNA metabolism; it is required for DNA replication and normal SOS inducibility. RecF binds preferentially to single-stranded, linear DNA. It also seems to bind ATP.</text>
</comment>
<comment type="subcellular location">
    <subcellularLocation>
        <location evidence="1">Cytoplasm</location>
    </subcellularLocation>
</comment>
<comment type="similarity">
    <text evidence="1">Belongs to the RecF family.</text>
</comment>
<evidence type="ECO:0000255" key="1">
    <source>
        <dbReference type="HAMAP-Rule" id="MF_00365"/>
    </source>
</evidence>
<accession>B4SYA6</accession>
<proteinExistence type="inferred from homology"/>
<reference key="1">
    <citation type="journal article" date="2011" name="J. Bacteriol.">
        <title>Comparative genomics of 28 Salmonella enterica isolates: evidence for CRISPR-mediated adaptive sublineage evolution.</title>
        <authorList>
            <person name="Fricke W.F."/>
            <person name="Mammel M.K."/>
            <person name="McDermott P.F."/>
            <person name="Tartera C."/>
            <person name="White D.G."/>
            <person name="Leclerc J.E."/>
            <person name="Ravel J."/>
            <person name="Cebula T.A."/>
        </authorList>
    </citation>
    <scope>NUCLEOTIDE SEQUENCE [LARGE SCALE GENOMIC DNA]</scope>
    <source>
        <strain>SL254</strain>
    </source>
</reference>
<organism>
    <name type="scientific">Salmonella newport (strain SL254)</name>
    <dbReference type="NCBI Taxonomy" id="423368"/>
    <lineage>
        <taxon>Bacteria</taxon>
        <taxon>Pseudomonadati</taxon>
        <taxon>Pseudomonadota</taxon>
        <taxon>Gammaproteobacteria</taxon>
        <taxon>Enterobacterales</taxon>
        <taxon>Enterobacteriaceae</taxon>
        <taxon>Salmonella</taxon>
    </lineage>
</organism>
<gene>
    <name evidence="1" type="primary">recF</name>
    <name type="ordered locus">SNSL254_A4121</name>
</gene>
<keyword id="KW-0067">ATP-binding</keyword>
<keyword id="KW-0963">Cytoplasm</keyword>
<keyword id="KW-0227">DNA damage</keyword>
<keyword id="KW-0234">DNA repair</keyword>
<keyword id="KW-0235">DNA replication</keyword>
<keyword id="KW-0238">DNA-binding</keyword>
<keyword id="KW-0547">Nucleotide-binding</keyword>
<keyword id="KW-0742">SOS response</keyword>
<sequence length="357" mass="40514">MSLTRLLIKDFRNIENADLALSPGFNFLVGANGSGKTSVLEAIYTLGHGRAFRSLQPGRVIRHEQEAFVLHGRLQSEERETSIGLTKDKQGDSKVRIDGTDGHKIAELAHLMPMQLITPEGFTLLNGGPKYRRAFLDWGCFHNEAGFFTAWSNLKRLLKQRNAALRQVSRYEQLRPWDKELIPLAEQISTWRAEYSSAIAQDMADTCQQFLPEFSLTFSFQRGWEKETDYADVLERSFERDRMLTYTAHGPHKADFRIRADGAPVEDTLSRGQLKLLMCALRLAQGEFLTRESGRRCLYLIDDFASELDDARRGLLASRLKATQSQVFVSAISAEHVIDMSDENSKMFTVEKGKITD</sequence>
<feature type="chain" id="PRO_1000121151" description="DNA replication and repair protein RecF">
    <location>
        <begin position="1"/>
        <end position="357"/>
    </location>
</feature>
<feature type="binding site" evidence="1">
    <location>
        <begin position="30"/>
        <end position="37"/>
    </location>
    <ligand>
        <name>ATP</name>
        <dbReference type="ChEBI" id="CHEBI:30616"/>
    </ligand>
</feature>
<name>RECF_SALNS</name>
<protein>
    <recommendedName>
        <fullName evidence="1">DNA replication and repair protein RecF</fullName>
    </recommendedName>
</protein>
<dbReference type="EMBL" id="CP001113">
    <property type="protein sequence ID" value="ACF64758.1"/>
    <property type="molecule type" value="Genomic_DNA"/>
</dbReference>
<dbReference type="RefSeq" id="WP_000060085.1">
    <property type="nucleotide sequence ID" value="NZ_CCMR01000001.1"/>
</dbReference>
<dbReference type="SMR" id="B4SYA6"/>
<dbReference type="KEGG" id="see:SNSL254_A4121"/>
<dbReference type="HOGENOM" id="CLU_040267_0_0_6"/>
<dbReference type="Proteomes" id="UP000008824">
    <property type="component" value="Chromosome"/>
</dbReference>
<dbReference type="GO" id="GO:0005737">
    <property type="term" value="C:cytoplasm"/>
    <property type="evidence" value="ECO:0007669"/>
    <property type="project" value="UniProtKB-SubCell"/>
</dbReference>
<dbReference type="GO" id="GO:0005524">
    <property type="term" value="F:ATP binding"/>
    <property type="evidence" value="ECO:0007669"/>
    <property type="project" value="UniProtKB-UniRule"/>
</dbReference>
<dbReference type="GO" id="GO:0003697">
    <property type="term" value="F:single-stranded DNA binding"/>
    <property type="evidence" value="ECO:0007669"/>
    <property type="project" value="UniProtKB-UniRule"/>
</dbReference>
<dbReference type="GO" id="GO:0006260">
    <property type="term" value="P:DNA replication"/>
    <property type="evidence" value="ECO:0007669"/>
    <property type="project" value="UniProtKB-UniRule"/>
</dbReference>
<dbReference type="GO" id="GO:0000731">
    <property type="term" value="P:DNA synthesis involved in DNA repair"/>
    <property type="evidence" value="ECO:0007669"/>
    <property type="project" value="TreeGrafter"/>
</dbReference>
<dbReference type="GO" id="GO:0006302">
    <property type="term" value="P:double-strand break repair"/>
    <property type="evidence" value="ECO:0007669"/>
    <property type="project" value="TreeGrafter"/>
</dbReference>
<dbReference type="GO" id="GO:0009432">
    <property type="term" value="P:SOS response"/>
    <property type="evidence" value="ECO:0007669"/>
    <property type="project" value="UniProtKB-UniRule"/>
</dbReference>
<dbReference type="FunFam" id="1.20.1050.90:FF:000001">
    <property type="entry name" value="DNA replication and repair protein RecF"/>
    <property type="match status" value="1"/>
</dbReference>
<dbReference type="Gene3D" id="3.40.50.300">
    <property type="entry name" value="P-loop containing nucleotide triphosphate hydrolases"/>
    <property type="match status" value="1"/>
</dbReference>
<dbReference type="Gene3D" id="1.20.1050.90">
    <property type="entry name" value="RecF/RecN/SMC, N-terminal domain"/>
    <property type="match status" value="1"/>
</dbReference>
<dbReference type="HAMAP" id="MF_00365">
    <property type="entry name" value="RecF"/>
    <property type="match status" value="1"/>
</dbReference>
<dbReference type="InterPro" id="IPR001238">
    <property type="entry name" value="DNA-binding_RecF"/>
</dbReference>
<dbReference type="InterPro" id="IPR018078">
    <property type="entry name" value="DNA-binding_RecF_CS"/>
</dbReference>
<dbReference type="InterPro" id="IPR027417">
    <property type="entry name" value="P-loop_NTPase"/>
</dbReference>
<dbReference type="InterPro" id="IPR003395">
    <property type="entry name" value="RecF/RecN/SMC_N"/>
</dbReference>
<dbReference type="InterPro" id="IPR042174">
    <property type="entry name" value="RecF_2"/>
</dbReference>
<dbReference type="NCBIfam" id="TIGR00611">
    <property type="entry name" value="recf"/>
    <property type="match status" value="1"/>
</dbReference>
<dbReference type="PANTHER" id="PTHR32182">
    <property type="entry name" value="DNA REPLICATION AND REPAIR PROTEIN RECF"/>
    <property type="match status" value="1"/>
</dbReference>
<dbReference type="PANTHER" id="PTHR32182:SF0">
    <property type="entry name" value="DNA REPLICATION AND REPAIR PROTEIN RECF"/>
    <property type="match status" value="1"/>
</dbReference>
<dbReference type="Pfam" id="PF02463">
    <property type="entry name" value="SMC_N"/>
    <property type="match status" value="1"/>
</dbReference>
<dbReference type="SUPFAM" id="SSF52540">
    <property type="entry name" value="P-loop containing nucleoside triphosphate hydrolases"/>
    <property type="match status" value="1"/>
</dbReference>
<dbReference type="PROSITE" id="PS00617">
    <property type="entry name" value="RECF_1"/>
    <property type="match status" value="1"/>
</dbReference>
<dbReference type="PROSITE" id="PS00618">
    <property type="entry name" value="RECF_2"/>
    <property type="match status" value="1"/>
</dbReference>